<evidence type="ECO:0000250" key="1">
    <source>
        <dbReference type="UniProtKB" id="P52848"/>
    </source>
</evidence>
<evidence type="ECO:0000250" key="2">
    <source>
        <dbReference type="UniProtKB" id="Q02353"/>
    </source>
</evidence>
<evidence type="ECO:0000250" key="3">
    <source>
        <dbReference type="UniProtKB" id="Q3UHN9"/>
    </source>
</evidence>
<evidence type="ECO:0000255" key="4"/>
<evidence type="ECO:0000305" key="5"/>
<sequence length="878" mass="101119">MSLSLKTRRFGRPVRPQLVLLLLFALCLLSVFISAYYLYGWKRGLEPSGSEAQSPDCDEPKISPSRLLPVKPLKPVDSSRTDPLVLVFVESLYSQLGQEIVAILESSRFKYRTEIAPGKGDMPTLTDKDRGRFALIVYENILKYVNLDAWNRELLDKYCVEYGVGIIGFFKANENSLLSAQLKGFPLYLHSNLGLKDCSINPKSPLLYITRPNQVEKGDLPGEDWTVFQSNHSTYEPVLLAKTKSAESIPHLSVDAALHTTVVQDLGLHDGIQRVLFGNNLNFWLHKLVFVDAVSFLTGKRLSLPLNRYVLVDIDDIFVGKEGTRMKVEDVKALYDTQMELRTHIPNFTFNLGFSGKFFHTGTDAEDEGDDLLLSYVKQFWWFPHMWSHMQPHLFHNQSVLAEQMALNRKFAVDHGIPTDMGYAVAPHHSGVYPVHVQLYEAWKQIWGIKVTSTEEYPHLKPARYRRGFVHNGIMILPRQTCGLFTHTIFYNEYPGGPVELDKIINGGELFLTVLLNPISIFMTHLSNYGNDRLGLYTFKLLVQFLNTWTNLKLETLPPVQLAHKYFQIFPEEKDPLWQDPCEDKRHKDIWSKEKTCDRFPKLLIIGPQKTGTTALYLFLGMHSDLSSNYPSSETFEEIQFYNGQNYHKGIDWYMEFFPIPSNTTSDFYFEKSANYFDSELAPRRVAALLPKAKIITILINPADRAYSWYQHQRAHDDPVAIKYTFQEVIKAGPEAPQRLRALQNRCLVPGWYSTHIERWMNHFHANQILVLDGKLLRTEPANVMETVQKFLGVTNAMDYHKTLAFDPKKGFWCQLLDGGKTKCLGKSKGRKYPDMDSDSRSFLMDYYRDHNIELSKLLYKMGQTLPTWLREELQNTR</sequence>
<dbReference type="EC" id="3.5.1.-" evidence="3"/>
<dbReference type="EC" id="2.8.2.8" evidence="3"/>
<dbReference type="EMBL" id="BC072733">
    <property type="protein sequence ID" value="AAH72733.1"/>
    <property type="molecule type" value="mRNA"/>
</dbReference>
<dbReference type="RefSeq" id="NP_001085429.1">
    <property type="nucleotide sequence ID" value="NM_001091960.1"/>
</dbReference>
<dbReference type="RefSeq" id="XP_018109729.1">
    <property type="nucleotide sequence ID" value="XM_018254240.1"/>
</dbReference>
<dbReference type="SMR" id="Q6GQK9"/>
<dbReference type="GlyCosmos" id="Q6GQK9">
    <property type="glycosylation" value="4 sites, No reported glycans"/>
</dbReference>
<dbReference type="GeneID" id="443855"/>
<dbReference type="KEGG" id="xla:443855"/>
<dbReference type="AGR" id="Xenbase:XB-GENE-955057"/>
<dbReference type="CTD" id="443855"/>
<dbReference type="Xenbase" id="XB-GENE-955057">
    <property type="gene designation" value="ndst1.S"/>
</dbReference>
<dbReference type="OMA" id="VGPDCDE"/>
<dbReference type="OrthoDB" id="8958249at2759"/>
<dbReference type="UniPathway" id="UPA00756"/>
<dbReference type="UniPathway" id="UPA00862"/>
<dbReference type="Proteomes" id="UP000186698">
    <property type="component" value="Chromosome 3S"/>
</dbReference>
<dbReference type="Bgee" id="443855">
    <property type="expression patterns" value="Expressed in liver and 20 other cell types or tissues"/>
</dbReference>
<dbReference type="GO" id="GO:0005794">
    <property type="term" value="C:Golgi apparatus"/>
    <property type="evidence" value="ECO:0000318"/>
    <property type="project" value="GO_Central"/>
</dbReference>
<dbReference type="GO" id="GO:0000139">
    <property type="term" value="C:Golgi membrane"/>
    <property type="evidence" value="ECO:0007669"/>
    <property type="project" value="UniProtKB-SubCell"/>
</dbReference>
<dbReference type="GO" id="GO:0032588">
    <property type="term" value="C:trans-Golgi network membrane"/>
    <property type="evidence" value="ECO:0000250"/>
    <property type="project" value="UniProtKB"/>
</dbReference>
<dbReference type="GO" id="GO:0019213">
    <property type="term" value="F:deacetylase activity"/>
    <property type="evidence" value="ECO:0000318"/>
    <property type="project" value="GO_Central"/>
</dbReference>
<dbReference type="GO" id="GO:0102140">
    <property type="term" value="F:heparan sulfate N-deacetylase activity"/>
    <property type="evidence" value="ECO:0000250"/>
    <property type="project" value="UniProtKB"/>
</dbReference>
<dbReference type="GO" id="GO:0015016">
    <property type="term" value="F:heparan sulfate N-sulfotransferase activity"/>
    <property type="evidence" value="ECO:0000250"/>
    <property type="project" value="UniProtKB"/>
</dbReference>
<dbReference type="GO" id="GO:0015012">
    <property type="term" value="P:heparan sulfate proteoglycan biosynthetic process"/>
    <property type="evidence" value="ECO:0000250"/>
    <property type="project" value="UniProtKB"/>
</dbReference>
<dbReference type="GO" id="GO:0030210">
    <property type="term" value="P:heparin proteoglycan biosynthetic process"/>
    <property type="evidence" value="ECO:0007669"/>
    <property type="project" value="UniProtKB-UniPathway"/>
</dbReference>
<dbReference type="FunFam" id="3.40.50.300:FF:000176">
    <property type="entry name" value="bifunctional heparan sulfate N-deacetylase/N-sulfotransferase 1"/>
    <property type="match status" value="1"/>
</dbReference>
<dbReference type="Gene3D" id="3.40.50.300">
    <property type="entry name" value="P-loop containing nucleotide triphosphate hydrolases"/>
    <property type="match status" value="1"/>
</dbReference>
<dbReference type="InterPro" id="IPR021930">
    <property type="entry name" value="Heparan_SO4_deacetylase_dom"/>
</dbReference>
<dbReference type="InterPro" id="IPR056793">
    <property type="entry name" value="HSNSD_N"/>
</dbReference>
<dbReference type="InterPro" id="IPR037359">
    <property type="entry name" value="NST/OST"/>
</dbReference>
<dbReference type="InterPro" id="IPR027417">
    <property type="entry name" value="P-loop_NTPase"/>
</dbReference>
<dbReference type="InterPro" id="IPR000863">
    <property type="entry name" value="Sulfotransferase_dom"/>
</dbReference>
<dbReference type="PANTHER" id="PTHR10605:SF30">
    <property type="entry name" value="BIFUNCTIONAL HEPARAN SULFATE N-DEACETYLASE_N-SULFOTRANSFERASE 1"/>
    <property type="match status" value="1"/>
</dbReference>
<dbReference type="PANTHER" id="PTHR10605">
    <property type="entry name" value="HEPARAN SULFATE SULFOTRANSFERASE"/>
    <property type="match status" value="1"/>
</dbReference>
<dbReference type="Pfam" id="PF12062">
    <property type="entry name" value="HSNSD-CE"/>
    <property type="match status" value="1"/>
</dbReference>
<dbReference type="Pfam" id="PF25119">
    <property type="entry name" value="HSNSD_N"/>
    <property type="match status" value="1"/>
</dbReference>
<dbReference type="Pfam" id="PF00685">
    <property type="entry name" value="Sulfotransfer_1"/>
    <property type="match status" value="1"/>
</dbReference>
<dbReference type="SUPFAM" id="SSF52540">
    <property type="entry name" value="P-loop containing nucleoside triphosphate hydrolases"/>
    <property type="match status" value="1"/>
</dbReference>
<proteinExistence type="evidence at transcript level"/>
<gene>
    <name type="primary">ndst1</name>
</gene>
<keyword id="KW-1015">Disulfide bond</keyword>
<keyword id="KW-0325">Glycoprotein</keyword>
<keyword id="KW-0333">Golgi apparatus</keyword>
<keyword id="KW-0378">Hydrolase</keyword>
<keyword id="KW-0472">Membrane</keyword>
<keyword id="KW-0511">Multifunctional enzyme</keyword>
<keyword id="KW-1185">Reference proteome</keyword>
<keyword id="KW-0735">Signal-anchor</keyword>
<keyword id="KW-0808">Transferase</keyword>
<keyword id="KW-0812">Transmembrane</keyword>
<keyword id="KW-1133">Transmembrane helix</keyword>
<comment type="function">
    <text evidence="3">Essential bifunctional enzyme that catalyzes both the N-deacetylation and the N-sulfation of glucosamine (GlcNAc) of the glycosaminoglycan in heparan sulfate. Modifies the GlcNAc-GlcA disaccharide repeating sugar backbone to make N-sulfated heparosan, a prerequisite substrate for later modifications in heparin biosynthesis. Plays a role in determining the extent and pattern of sulfation of heparan sulfate.</text>
</comment>
<comment type="catalytic activity">
    <reaction evidence="3">
        <text>alpha-D-glucosaminyl-[heparan sulfate](n) + 3'-phosphoadenylyl sulfate = N-sulfo-alpha-D-glucosaminyl-[heparan sulfate](n) + adenosine 3',5'-bisphosphate + 2 H(+)</text>
        <dbReference type="Rhea" id="RHEA:21980"/>
        <dbReference type="Rhea" id="RHEA-COMP:9830"/>
        <dbReference type="Rhea" id="RHEA-COMP:14602"/>
        <dbReference type="ChEBI" id="CHEBI:15378"/>
        <dbReference type="ChEBI" id="CHEBI:58339"/>
        <dbReference type="ChEBI" id="CHEBI:58343"/>
        <dbReference type="ChEBI" id="CHEBI:58388"/>
        <dbReference type="ChEBI" id="CHEBI:140572"/>
        <dbReference type="EC" id="2.8.2.8"/>
    </reaction>
    <physiologicalReaction direction="left-to-right" evidence="3">
        <dbReference type="Rhea" id="RHEA:21981"/>
    </physiologicalReaction>
</comment>
<comment type="pathway">
    <text evidence="3">Glycan metabolism; heparan sulfate biosynthesis.</text>
</comment>
<comment type="pathway">
    <text evidence="3">Glycan metabolism; heparin biosynthesis.</text>
</comment>
<comment type="subunit">
    <text evidence="1">Monomer.</text>
</comment>
<comment type="subcellular location">
    <subcellularLocation>
        <location evidence="2">Golgi apparatus membrane</location>
        <topology evidence="4">Single-pass type II membrane protein</topology>
    </subcellularLocation>
    <subcellularLocation>
        <location evidence="1">Golgi apparatus</location>
        <location evidence="1">trans-Golgi network membrane</location>
        <topology evidence="4">Single-pass type II membrane protein</topology>
    </subcellularLocation>
</comment>
<comment type="similarity">
    <text evidence="5">Belongs to the sulfotransferase 1 family. NDST subfamily.</text>
</comment>
<feature type="chain" id="PRO_0000225656" description="Bifunctional heparan sulfate N-deacetylase/N-sulfotransferase 1">
    <location>
        <begin position="1"/>
        <end position="878"/>
    </location>
</feature>
<feature type="topological domain" description="Cytoplasmic" evidence="4">
    <location>
        <begin position="1"/>
        <end position="17"/>
    </location>
</feature>
<feature type="transmembrane region" description="Helical; Signal-anchor for type II membrane protein" evidence="4">
    <location>
        <begin position="18"/>
        <end position="38"/>
    </location>
</feature>
<feature type="topological domain" description="Lumenal" evidence="4">
    <location>
        <begin position="39"/>
        <end position="878"/>
    </location>
</feature>
<feature type="region of interest" description="Sufficient for localization to Golgi membrane" evidence="1">
    <location>
        <begin position="1"/>
        <end position="169"/>
    </location>
</feature>
<feature type="region of interest" description="Heparan sulfate N-deacetylase 1">
    <location>
        <begin position="40"/>
        <end position="594"/>
    </location>
</feature>
<feature type="region of interest" description="Heparan sulfate N-sulfotransferase 1">
    <location>
        <begin position="595"/>
        <end position="878"/>
    </location>
</feature>
<feature type="active site" description="For sulfotransferase activity" evidence="1">
    <location>
        <position position="610"/>
    </location>
</feature>
<feature type="binding site" evidence="1">
    <location>
        <begin position="610"/>
        <end position="614"/>
    </location>
    <ligand>
        <name>adenosine 3',5'-bisphosphate</name>
        <dbReference type="ChEBI" id="CHEBI:58343"/>
    </ligand>
</feature>
<feature type="binding site" evidence="1">
    <location>
        <position position="708"/>
    </location>
    <ligand>
        <name>adenosine 3',5'-bisphosphate</name>
        <dbReference type="ChEBI" id="CHEBI:58343"/>
    </ligand>
</feature>
<feature type="binding site" evidence="1">
    <location>
        <position position="813"/>
    </location>
    <ligand>
        <name>adenosine 3',5'-bisphosphate</name>
        <dbReference type="ChEBI" id="CHEBI:58343"/>
    </ligand>
</feature>
<feature type="binding site" evidence="1">
    <location>
        <begin position="829"/>
        <end position="833"/>
    </location>
    <ligand>
        <name>adenosine 3',5'-bisphosphate</name>
        <dbReference type="ChEBI" id="CHEBI:58343"/>
    </ligand>
</feature>
<feature type="glycosylation site" description="N-linked (GlcNAc...) asparagine" evidence="4">
    <location>
        <position position="231"/>
    </location>
</feature>
<feature type="glycosylation site" description="N-linked (GlcNAc...) asparagine" evidence="4">
    <location>
        <position position="347"/>
    </location>
</feature>
<feature type="glycosylation site" description="N-linked (GlcNAc...) asparagine" evidence="4">
    <location>
        <position position="397"/>
    </location>
</feature>
<feature type="glycosylation site" description="N-linked (GlcNAc...) asparagine" evidence="4">
    <location>
        <position position="663"/>
    </location>
</feature>
<feature type="disulfide bond" evidence="1">
    <location>
        <begin position="814"/>
        <end position="824"/>
    </location>
</feature>
<organism>
    <name type="scientific">Xenopus laevis</name>
    <name type="common">African clawed frog</name>
    <dbReference type="NCBI Taxonomy" id="8355"/>
    <lineage>
        <taxon>Eukaryota</taxon>
        <taxon>Metazoa</taxon>
        <taxon>Chordata</taxon>
        <taxon>Craniata</taxon>
        <taxon>Vertebrata</taxon>
        <taxon>Euteleostomi</taxon>
        <taxon>Amphibia</taxon>
        <taxon>Batrachia</taxon>
        <taxon>Anura</taxon>
        <taxon>Pipoidea</taxon>
        <taxon>Pipidae</taxon>
        <taxon>Xenopodinae</taxon>
        <taxon>Xenopus</taxon>
        <taxon>Xenopus</taxon>
    </lineage>
</organism>
<reference key="1">
    <citation type="submission" date="2004-06" db="EMBL/GenBank/DDBJ databases">
        <authorList>
            <consortium name="NIH - Xenopus Gene Collection (XGC) project"/>
        </authorList>
    </citation>
    <scope>NUCLEOTIDE SEQUENCE [LARGE SCALE MRNA]</scope>
    <source>
        <tissue>Spleen</tissue>
    </source>
</reference>
<accession>Q6GQK9</accession>
<name>NDST1_XENLA</name>
<protein>
    <recommendedName>
        <fullName evidence="3">Bifunctional heparan sulfate N-deacetylase/N-sulfotransferase 1</fullName>
    </recommendedName>
    <alternativeName>
        <fullName>Glucosaminyl N-deacetylase/N-sulfotransferase 1</fullName>
        <shortName>NDST-1</shortName>
    </alternativeName>
    <domain>
        <recommendedName>
            <fullName evidence="3">Heparan sulfate N-deacetylase 1</fullName>
            <ecNumber evidence="3">3.5.1.-</ecNumber>
        </recommendedName>
    </domain>
    <domain>
        <recommendedName>
            <fullName evidence="3">Heparan sulfate N-sulfotransferase 1</fullName>
            <ecNumber evidence="3">2.8.2.8</ecNumber>
        </recommendedName>
    </domain>
</protein>